<feature type="peptide" id="PRO_0000294958" description="Kalata-B11" evidence="2 3">
    <location>
        <begin position="1"/>
        <end position="29"/>
    </location>
</feature>
<feature type="disulfide bond" evidence="1 2">
    <location>
        <begin position="5"/>
        <end position="19"/>
    </location>
</feature>
<feature type="disulfide bond" evidence="1 2">
    <location>
        <begin position="9"/>
        <end position="21"/>
    </location>
</feature>
<feature type="disulfide bond" evidence="1 2">
    <location>
        <begin position="14"/>
        <end position="26"/>
    </location>
</feature>
<feature type="cross-link" description="Cyclopeptide (Gly-Asp)" evidence="3">
    <location>
        <begin position="1"/>
        <end position="29"/>
    </location>
</feature>
<keyword id="KW-0903">Direct protein sequencing</keyword>
<keyword id="KW-1015">Disulfide bond</keyword>
<keyword id="KW-0960">Knottin</keyword>
<keyword id="KW-0611">Plant defense</keyword>
<sequence>GLPVCGETCFGGTCNTPGCSCTDPICTRD</sequence>
<reference evidence="4" key="1">
    <citation type="journal article" date="2007" name="ChemBioChem">
        <title>The cyclotide fingerprint in Oldenlandia affinis: elucidation of chemically modified, linear and novel macrocyclic peptides.</title>
        <authorList>
            <person name="Plan M.R.R."/>
            <person name="Goeransson U."/>
            <person name="Clark R.J."/>
            <person name="Daly N.L."/>
            <person name="Colgrave M.L."/>
            <person name="Craik D.J."/>
        </authorList>
    </citation>
    <scope>PROTEIN SEQUENCE</scope>
    <scope>MASS SPECTROMETRY</scope>
</reference>
<evidence type="ECO:0000250" key="1">
    <source>
        <dbReference type="UniProtKB" id="P83836"/>
    </source>
</evidence>
<evidence type="ECO:0000255" key="2">
    <source>
        <dbReference type="PROSITE-ProRule" id="PRU00395"/>
    </source>
</evidence>
<evidence type="ECO:0000269" key="3">
    <source>
    </source>
</evidence>
<evidence type="ECO:0000305" key="4"/>
<proteinExistence type="evidence at protein level"/>
<organism>
    <name type="scientific">Oldenlandia affinis</name>
    <dbReference type="NCBI Taxonomy" id="60225"/>
    <lineage>
        <taxon>Eukaryota</taxon>
        <taxon>Viridiplantae</taxon>
        <taxon>Streptophyta</taxon>
        <taxon>Embryophyta</taxon>
        <taxon>Tracheophyta</taxon>
        <taxon>Spermatophyta</taxon>
        <taxon>Magnoliopsida</taxon>
        <taxon>eudicotyledons</taxon>
        <taxon>Gunneridae</taxon>
        <taxon>Pentapetalae</taxon>
        <taxon>asterids</taxon>
        <taxon>lamiids</taxon>
        <taxon>Gentianales</taxon>
        <taxon>Rubiaceae</taxon>
        <taxon>Rubioideae</taxon>
        <taxon>Spermacoceae</taxon>
        <taxon>Hedyotis-Oldenlandia complex</taxon>
        <taxon>Oldenlandia</taxon>
    </lineage>
</organism>
<dbReference type="SMR" id="P85129"/>
<dbReference type="GO" id="GO:0006952">
    <property type="term" value="P:defense response"/>
    <property type="evidence" value="ECO:0007669"/>
    <property type="project" value="UniProtKB-KW"/>
</dbReference>
<dbReference type="InterPro" id="IPR005535">
    <property type="entry name" value="Cyclotide"/>
</dbReference>
<dbReference type="InterPro" id="IPR012324">
    <property type="entry name" value="Cyclotide_moebius_CS"/>
</dbReference>
<dbReference type="InterPro" id="IPR036146">
    <property type="entry name" value="Cyclotide_sf"/>
</dbReference>
<dbReference type="Pfam" id="PF03784">
    <property type="entry name" value="Cyclotide"/>
    <property type="match status" value="1"/>
</dbReference>
<dbReference type="PIRSF" id="PIRSF037891">
    <property type="entry name" value="Cycloviolacin"/>
    <property type="match status" value="1"/>
</dbReference>
<dbReference type="SUPFAM" id="SSF57038">
    <property type="entry name" value="Cyclotides"/>
    <property type="match status" value="1"/>
</dbReference>
<dbReference type="PROSITE" id="PS51052">
    <property type="entry name" value="CYCLOTIDE"/>
    <property type="match status" value="1"/>
</dbReference>
<dbReference type="PROSITE" id="PS60009">
    <property type="entry name" value="CYCLOTIDE_MOEBIUS"/>
    <property type="match status" value="1"/>
</dbReference>
<name>KAB11_OLDAF</name>
<comment type="function">
    <text evidence="4">Probably participates in a plant defense mechanism.</text>
</comment>
<comment type="domain">
    <text evidence="1">The presence of a 'disulfide through disulfide knot' structurally defines this protein as a knottin.</text>
</comment>
<comment type="PTM">
    <text evidence="2 3">This is a cyclic peptide.</text>
</comment>
<comment type="mass spectrometry"/>
<comment type="similarity">
    <text evidence="2">Belongs to the cyclotide family. Moebius subfamily.</text>
</comment>
<comment type="caution">
    <text evidence="3">This peptide is cyclic. The start position was chosen by similarity to OAK1 (kalata-B1) for which the DNA sequence is known.</text>
</comment>
<accession>P85129</accession>
<protein>
    <recommendedName>
        <fullName>Kalata-B11</fullName>
    </recommendedName>
</protein>